<proteinExistence type="evidence at transcript level"/>
<accession>Q95JR3</accession>
<accession>Q95K13</accession>
<reference key="1">
    <citation type="submission" date="2001-08" db="EMBL/GenBank/DDBJ databases">
        <title>DNA sequences of macaque genes expressed in brain or testis and its evolutionary implications.</title>
        <authorList>
            <consortium name="International consortium for macaque cDNA sequencing and analysis"/>
        </authorList>
    </citation>
    <scope>NUCLEOTIDE SEQUENCE [LARGE SCALE MRNA] (ISOFORMS 1 AND 2)</scope>
    <source>
        <tissue>Testis</tissue>
    </source>
</reference>
<feature type="chain" id="PRO_0000274672" description="Protein SERAC1">
    <location>
        <begin position="1"/>
        <end position="531"/>
    </location>
</feature>
<feature type="transmembrane region" description="Helical" evidence="3">
    <location>
        <begin position="33"/>
        <end position="50"/>
    </location>
</feature>
<feature type="splice variant" id="VSP_022861" description="In isoform 2." evidence="4">
    <location>
        <begin position="1"/>
        <end position="70"/>
    </location>
</feature>
<feature type="splice variant" id="VSP_022862" description="In isoform 2." evidence="4">
    <original>KTWLAKDCPALRIISVEYDTTLSDWRARCPMERRSLLSISSGI</original>
    <variation>FPICDFPGACRRGTAGSEGRATINSAHHKNAIKRVPKIERRMN</variation>
    <location>
        <begin position="436"/>
        <end position="478"/>
    </location>
</feature>
<feature type="splice variant" id="VSP_022863" description="In isoform 2." evidence="4">
    <location>
        <begin position="479"/>
        <end position="531"/>
    </location>
</feature>
<feature type="sequence conflict" description="In Ref. 1; BAB62959." evidence="5" ref="1">
    <original>R</original>
    <variation>Q</variation>
    <location>
        <position position="390"/>
    </location>
</feature>
<organism>
    <name type="scientific">Macaca fascicularis</name>
    <name type="common">Crab-eating macaque</name>
    <name type="synonym">Cynomolgus monkey</name>
    <dbReference type="NCBI Taxonomy" id="9541"/>
    <lineage>
        <taxon>Eukaryota</taxon>
        <taxon>Metazoa</taxon>
        <taxon>Chordata</taxon>
        <taxon>Craniata</taxon>
        <taxon>Vertebrata</taxon>
        <taxon>Euteleostomi</taxon>
        <taxon>Mammalia</taxon>
        <taxon>Eutheria</taxon>
        <taxon>Euarchontoglires</taxon>
        <taxon>Primates</taxon>
        <taxon>Haplorrhini</taxon>
        <taxon>Catarrhini</taxon>
        <taxon>Cercopithecidae</taxon>
        <taxon>Cercopithecinae</taxon>
        <taxon>Macaca</taxon>
    </lineage>
</organism>
<gene>
    <name type="primary">SERAC1</name>
    <name type="ORF">QtsA-14245</name>
</gene>
<protein>
    <recommendedName>
        <fullName>Protein SERAC1</fullName>
    </recommendedName>
    <alternativeName>
        <fullName>Serine active site-containing protein 1</fullName>
    </alternativeName>
</protein>
<keyword id="KW-0025">Alternative splicing</keyword>
<keyword id="KW-0256">Endoplasmic reticulum</keyword>
<keyword id="KW-0444">Lipid biosynthesis</keyword>
<keyword id="KW-0443">Lipid metabolism</keyword>
<keyword id="KW-0472">Membrane</keyword>
<keyword id="KW-0496">Mitochondrion</keyword>
<keyword id="KW-0594">Phospholipid biosynthesis</keyword>
<keyword id="KW-1208">Phospholipid metabolism</keyword>
<keyword id="KW-1185">Reference proteome</keyword>
<keyword id="KW-0812">Transmembrane</keyword>
<keyword id="KW-1133">Transmembrane helix</keyword>
<name>SRAC1_MACFA</name>
<evidence type="ECO:0000250" key="1">
    <source>
        <dbReference type="UniProtKB" id="Q3U213"/>
    </source>
</evidence>
<evidence type="ECO:0000250" key="2">
    <source>
        <dbReference type="UniProtKB" id="Q96JX3"/>
    </source>
</evidence>
<evidence type="ECO:0000255" key="3"/>
<evidence type="ECO:0000303" key="4">
    <source ref="1"/>
</evidence>
<evidence type="ECO:0000305" key="5"/>
<comment type="function">
    <text evidence="2">Facilitates the transport of serine from the cytosol to the mitochondria by interacting with and stabilizing Sideroflexin-1 (SFXN1), a mitochondrial serine transporter, playing a fundamental role in the one-carbon cycle responsible for the synthesis of nucleotides needed for mitochondrial DNA replication. Plays an important role in the phosphatidylglycerol (PG) remodeling that is essential for both mitochondrial function and intracellular cholesterol trafficking. Specifically involved in the exchange of the sn-1 acyl chain from PG 16:0/18:1(9Z) (also known as 1-hexadecanoyl-2-(9Z-octadecenoyl)-sn-glycero-3-phospho-(1'-sn-glycerol)) to PG 18:0/18:1(9Z) (also known as 1-octadecanoyl-2-(9Z-octadecenoyl)-sn-glycero-3-phospho-(1'-sn-glycerol)), a step needed in the bis(monoacylglycerol)phosphate biosynthetic pathway. May have acyltransferase activity although the mechanism for PG remodeling has not been determined.</text>
</comment>
<comment type="subcellular location">
    <subcellularLocation>
        <location evidence="1">Mitochondrion membrane</location>
        <topology evidence="2">Single-pass membrane protein</topology>
    </subcellularLocation>
    <subcellularLocation>
        <location evidence="2">Endoplasmic reticulum</location>
    </subcellularLocation>
    <subcellularLocation>
        <location evidence="2">Mitochondrion</location>
    </subcellularLocation>
    <text evidence="2">Localizes at the endoplasmic reticulum and at the endoplasmic reticulum-mitochondria interface.</text>
</comment>
<comment type="alternative products">
    <event type="alternative splicing"/>
    <isoform>
        <id>Q95JR3-1</id>
        <name>1</name>
        <sequence type="displayed"/>
    </isoform>
    <isoform>
        <id>Q95JR3-2</id>
        <name>2</name>
        <sequence type="described" ref="VSP_022861 VSP_022862 VSP_022863"/>
    </isoform>
</comment>
<comment type="similarity">
    <text evidence="5">Belongs to the SERAC1 family.</text>
</comment>
<sequence>MSLAAYCVICCRRVGTSTSPPKSGTRWRDIRNIIKFTGSLILGGSLFLTYEVLALKKAVTLDTQVVEREKMKSYIYVHTVSLDKGENHGIAWQARKELHKAVRKVLATSAKILRNPFADPFSTVDIEDHECAVWLLLRKSKSDDKTTRLEAVQEMSEAHHWHDYQYRLIAQACDPKTLIGLARSKESDLRFFLLPPPLPSLKEDSSTEEELRQLLASLPQTELDECIQYFTSLALSESSQSLAAQKGGLWCFGGNGLPYAESFGEVPSATVEMFCLEAIVKHSEISTHCDKIEANGGLQLLQRLYQLHKDCPKVQRNIMRIIGNMALNEHLHSSIVRSGWVSIMAEAMKSDRIMEASHAARILANLDRETVQEKYQDGVYVLHPQYRTSRPIKADVLFIHGLMGAAFKTWRQQDSEQAVIEKPMEEEDRYTTCWPKTWLAKDCPALRIISVEYDTTLSDWRARCPMERRSLLSISSGIGEVLESPLHSEATNFLGSSELLVLGIGRWFGYHIAWEVFSSKRCCWKPLRSQK</sequence>
<dbReference type="EMBL" id="AB070014">
    <property type="protein sequence ID" value="BAB62959.1"/>
    <property type="molecule type" value="mRNA"/>
</dbReference>
<dbReference type="EMBL" id="AB070116">
    <property type="protein sequence ID" value="BAB63061.1"/>
    <property type="molecule type" value="mRNA"/>
</dbReference>
<dbReference type="SMR" id="Q95JR3"/>
<dbReference type="STRING" id="9541.ENSMFAP00000039292"/>
<dbReference type="eggNOG" id="KOG2029">
    <property type="taxonomic scope" value="Eukaryota"/>
</dbReference>
<dbReference type="Proteomes" id="UP000233100">
    <property type="component" value="Unplaced"/>
</dbReference>
<dbReference type="GO" id="GO:0005783">
    <property type="term" value="C:endoplasmic reticulum"/>
    <property type="evidence" value="ECO:0007669"/>
    <property type="project" value="UniProtKB-SubCell"/>
</dbReference>
<dbReference type="GO" id="GO:0016020">
    <property type="term" value="C:membrane"/>
    <property type="evidence" value="ECO:0007669"/>
    <property type="project" value="UniProtKB-SubCell"/>
</dbReference>
<dbReference type="GO" id="GO:0005739">
    <property type="term" value="C:mitochondrion"/>
    <property type="evidence" value="ECO:0007669"/>
    <property type="project" value="UniProtKB-SubCell"/>
</dbReference>
<dbReference type="GO" id="GO:0008654">
    <property type="term" value="P:phospholipid biosynthetic process"/>
    <property type="evidence" value="ECO:0007669"/>
    <property type="project" value="UniProtKB-KW"/>
</dbReference>
<dbReference type="FunFam" id="1.25.10.10:FF:000791">
    <property type="entry name" value="SERAC1 isoform 1"/>
    <property type="match status" value="1"/>
</dbReference>
<dbReference type="Gene3D" id="1.25.10.10">
    <property type="entry name" value="Leucine-rich Repeat Variant"/>
    <property type="match status" value="1"/>
</dbReference>
<dbReference type="InterPro" id="IPR011989">
    <property type="entry name" value="ARM-like"/>
</dbReference>
<dbReference type="InterPro" id="IPR016024">
    <property type="entry name" value="ARM-type_fold"/>
</dbReference>
<dbReference type="InterPro" id="IPR052374">
    <property type="entry name" value="SERAC1"/>
</dbReference>
<dbReference type="PANTHER" id="PTHR48182">
    <property type="entry name" value="PROTEIN SERAC1"/>
    <property type="match status" value="1"/>
</dbReference>
<dbReference type="PANTHER" id="PTHR48182:SF2">
    <property type="entry name" value="PROTEIN SERAC1"/>
    <property type="match status" value="1"/>
</dbReference>
<dbReference type="SUPFAM" id="SSF48371">
    <property type="entry name" value="ARM repeat"/>
    <property type="match status" value="1"/>
</dbReference>